<sequence length="251" mass="27843">MKRIVVKVGSHVISEENTLSFERLKNLVAFLAKLMEKYEVILVTSAAISAGHTKLDIDRKNLINKQVLAAIGQPFLISVYNELLAKFNKLGGQILLTGKDFDSRKATKHAKNAIDMMINLGILPIINENDATAIEEIVFGDNDSLSAYATHFFDADLLVILSDIDGFYDKNPSEFSDAKRLEKITHIKEEWLQATIKTGSEHGTGGIVTKLKAAKFLLEHNKKMFLASGFDLSVAKTFLLEDKQIGGTLFE</sequence>
<feature type="chain" id="PRO_0000109656" description="Glutamate 5-kinase">
    <location>
        <begin position="1"/>
        <end position="251"/>
    </location>
</feature>
<feature type="binding site" evidence="1">
    <location>
        <position position="7"/>
    </location>
    <ligand>
        <name>ATP</name>
        <dbReference type="ChEBI" id="CHEBI:30616"/>
    </ligand>
</feature>
<feature type="binding site" evidence="1">
    <location>
        <position position="45"/>
    </location>
    <ligand>
        <name>substrate</name>
    </ligand>
</feature>
<feature type="binding site" evidence="1">
    <location>
        <position position="130"/>
    </location>
    <ligand>
        <name>substrate</name>
    </ligand>
</feature>
<feature type="binding site" evidence="1">
    <location>
        <position position="142"/>
    </location>
    <ligand>
        <name>substrate</name>
    </ligand>
</feature>
<feature type="binding site">
    <location>
        <begin position="162"/>
        <end position="163"/>
    </location>
    <ligand>
        <name>ATP</name>
        <dbReference type="ChEBI" id="CHEBI:30616"/>
    </ligand>
</feature>
<feature type="binding site">
    <location>
        <begin position="168"/>
        <end position="173"/>
    </location>
    <ligand>
        <name>ATP</name>
        <dbReference type="ChEBI" id="CHEBI:30616"/>
    </ligand>
</feature>
<feature type="binding site">
    <location>
        <begin position="204"/>
        <end position="210"/>
    </location>
    <ligand>
        <name>ATP</name>
        <dbReference type="ChEBI" id="CHEBI:30616"/>
    </ligand>
</feature>
<feature type="strand" evidence="2">
    <location>
        <begin position="3"/>
        <end position="8"/>
    </location>
</feature>
<feature type="helix" evidence="2">
    <location>
        <begin position="10"/>
        <end position="13"/>
    </location>
</feature>
<feature type="strand" evidence="2">
    <location>
        <begin position="16"/>
        <end position="19"/>
    </location>
</feature>
<feature type="helix" evidence="2">
    <location>
        <begin position="21"/>
        <end position="37"/>
    </location>
</feature>
<feature type="strand" evidence="2">
    <location>
        <begin position="38"/>
        <end position="44"/>
    </location>
</feature>
<feature type="helix" evidence="2">
    <location>
        <begin position="47"/>
        <end position="54"/>
    </location>
</feature>
<feature type="strand" evidence="2">
    <location>
        <begin position="59"/>
        <end position="61"/>
    </location>
</feature>
<feature type="helix" evidence="2">
    <location>
        <begin position="62"/>
        <end position="84"/>
    </location>
</feature>
<feature type="helix" evidence="2">
    <location>
        <begin position="85"/>
        <end position="87"/>
    </location>
</feature>
<feature type="strand" evidence="2">
    <location>
        <begin position="91"/>
        <end position="96"/>
    </location>
</feature>
<feature type="helix" evidence="2">
    <location>
        <begin position="99"/>
        <end position="102"/>
    </location>
</feature>
<feature type="helix" evidence="2">
    <location>
        <begin position="104"/>
        <end position="119"/>
    </location>
</feature>
<feature type="strand" evidence="2">
    <location>
        <begin position="123"/>
        <end position="128"/>
    </location>
</feature>
<feature type="turn" evidence="2">
    <location>
        <begin position="130"/>
        <end position="132"/>
    </location>
</feature>
<feature type="helix" evidence="2">
    <location>
        <begin position="135"/>
        <end position="138"/>
    </location>
</feature>
<feature type="turn" evidence="2">
    <location>
        <begin position="140"/>
        <end position="142"/>
    </location>
</feature>
<feature type="helix" evidence="2">
    <location>
        <begin position="143"/>
        <end position="152"/>
    </location>
</feature>
<feature type="strand" evidence="2">
    <location>
        <begin position="156"/>
        <end position="164"/>
    </location>
</feature>
<feature type="strand" evidence="2">
    <location>
        <begin position="168"/>
        <end position="170"/>
    </location>
</feature>
<feature type="turn" evidence="2">
    <location>
        <begin position="172"/>
        <end position="174"/>
    </location>
</feature>
<feature type="strand" evidence="2">
    <location>
        <begin position="183"/>
        <end position="185"/>
    </location>
</feature>
<feature type="helix" evidence="2">
    <location>
        <begin position="189"/>
        <end position="191"/>
    </location>
</feature>
<feature type="helix" evidence="2">
    <location>
        <begin position="206"/>
        <end position="219"/>
    </location>
</feature>
<feature type="strand" evidence="2">
    <location>
        <begin position="223"/>
        <end position="231"/>
    </location>
</feature>
<feature type="helix" evidence="2">
    <location>
        <begin position="233"/>
        <end position="240"/>
    </location>
</feature>
<feature type="strand" evidence="2">
    <location>
        <begin position="246"/>
        <end position="250"/>
    </location>
</feature>
<accession>Q9PJ29</accession>
<accession>Q0PC40</accession>
<keyword id="KW-0002">3D-structure</keyword>
<keyword id="KW-0028">Amino-acid biosynthesis</keyword>
<keyword id="KW-0067">ATP-binding</keyword>
<keyword id="KW-0963">Cytoplasm</keyword>
<keyword id="KW-0418">Kinase</keyword>
<keyword id="KW-0547">Nucleotide-binding</keyword>
<keyword id="KW-0641">Proline biosynthesis</keyword>
<keyword id="KW-1185">Reference proteome</keyword>
<keyword id="KW-0808">Transferase</keyword>
<evidence type="ECO:0000255" key="1">
    <source>
        <dbReference type="HAMAP-Rule" id="MF_00456"/>
    </source>
</evidence>
<evidence type="ECO:0007829" key="2">
    <source>
        <dbReference type="PDB" id="2AKO"/>
    </source>
</evidence>
<organism>
    <name type="scientific">Campylobacter jejuni subsp. jejuni serotype O:2 (strain ATCC 700819 / NCTC 11168)</name>
    <dbReference type="NCBI Taxonomy" id="192222"/>
    <lineage>
        <taxon>Bacteria</taxon>
        <taxon>Pseudomonadati</taxon>
        <taxon>Campylobacterota</taxon>
        <taxon>Epsilonproteobacteria</taxon>
        <taxon>Campylobacterales</taxon>
        <taxon>Campylobacteraceae</taxon>
        <taxon>Campylobacter</taxon>
    </lineage>
</organism>
<proteinExistence type="evidence at protein level"/>
<reference key="1">
    <citation type="journal article" date="2000" name="Nature">
        <title>The genome sequence of the food-borne pathogen Campylobacter jejuni reveals hypervariable sequences.</title>
        <authorList>
            <person name="Parkhill J."/>
            <person name="Wren B.W."/>
            <person name="Mungall K.L."/>
            <person name="Ketley J.M."/>
            <person name="Churcher C.M."/>
            <person name="Basham D."/>
            <person name="Chillingworth T."/>
            <person name="Davies R.M."/>
            <person name="Feltwell T."/>
            <person name="Holroyd S."/>
            <person name="Jagels K."/>
            <person name="Karlyshev A.V."/>
            <person name="Moule S."/>
            <person name="Pallen M.J."/>
            <person name="Penn C.W."/>
            <person name="Quail M.A."/>
            <person name="Rajandream M.A."/>
            <person name="Rutherford K.M."/>
            <person name="van Vliet A.H.M."/>
            <person name="Whitehead S."/>
            <person name="Barrell B.G."/>
        </authorList>
    </citation>
    <scope>NUCLEOTIDE SEQUENCE [LARGE SCALE GENOMIC DNA]</scope>
    <source>
        <strain>ATCC 700819 / NCTC 11168</strain>
    </source>
</reference>
<reference key="2">
    <citation type="submission" date="2005-08" db="PDB data bank">
        <title>Crystal structure of glutamate 5-kinase from Campylobacter jejuni.</title>
        <authorList>
            <person name="Gorman J."/>
            <person name="Shapiro L."/>
        </authorList>
    </citation>
    <scope>X-RAY CRYSTALLOGRAPHY (2.20 ANGSTROMS) IN COMPLEX WITH ADP</scope>
</reference>
<comment type="function">
    <text evidence="1">Catalyzes the transfer of a phosphate group to glutamate to form L-glutamate 5-phosphate.</text>
</comment>
<comment type="catalytic activity">
    <reaction evidence="1">
        <text>L-glutamate + ATP = L-glutamyl 5-phosphate + ADP</text>
        <dbReference type="Rhea" id="RHEA:14877"/>
        <dbReference type="ChEBI" id="CHEBI:29985"/>
        <dbReference type="ChEBI" id="CHEBI:30616"/>
        <dbReference type="ChEBI" id="CHEBI:58274"/>
        <dbReference type="ChEBI" id="CHEBI:456216"/>
        <dbReference type="EC" id="2.7.2.11"/>
    </reaction>
</comment>
<comment type="pathway">
    <text evidence="1">Amino-acid biosynthesis; L-proline biosynthesis; L-glutamate 5-semialdehyde from L-glutamate: step 1/2.</text>
</comment>
<comment type="subcellular location">
    <subcellularLocation>
        <location evidence="1">Cytoplasm</location>
    </subcellularLocation>
</comment>
<comment type="similarity">
    <text evidence="1">Belongs to the glutamate 5-kinase family.</text>
</comment>
<gene>
    <name evidence="1" type="primary">proB</name>
    <name type="ordered locus">Cj0097</name>
</gene>
<protein>
    <recommendedName>
        <fullName evidence="1">Glutamate 5-kinase</fullName>
        <ecNumber evidence="1">2.7.2.11</ecNumber>
    </recommendedName>
    <alternativeName>
        <fullName evidence="1">Gamma-glutamyl kinase</fullName>
        <shortName evidence="1">GK</shortName>
    </alternativeName>
</protein>
<name>PROB_CAMJE</name>
<dbReference type="EC" id="2.7.2.11" evidence="1"/>
<dbReference type="EMBL" id="AL111168">
    <property type="protein sequence ID" value="CAL34268.1"/>
    <property type="molecule type" value="Genomic_DNA"/>
</dbReference>
<dbReference type="PIR" id="A81426">
    <property type="entry name" value="A81426"/>
</dbReference>
<dbReference type="RefSeq" id="WP_002851769.1">
    <property type="nucleotide sequence ID" value="NZ_SZUC01000005.1"/>
</dbReference>
<dbReference type="RefSeq" id="YP_002343557.1">
    <property type="nucleotide sequence ID" value="NC_002163.1"/>
</dbReference>
<dbReference type="PDB" id="2AKO">
    <property type="method" value="X-ray"/>
    <property type="resolution" value="2.20 A"/>
    <property type="chains" value="A/B/C/D=1-251"/>
</dbReference>
<dbReference type="PDBsum" id="2AKO"/>
<dbReference type="SMR" id="Q9PJ29"/>
<dbReference type="IntAct" id="Q9PJ29">
    <property type="interactions" value="9"/>
</dbReference>
<dbReference type="STRING" id="192222.Cj0097"/>
<dbReference type="PaxDb" id="192222-Cj0097"/>
<dbReference type="EnsemblBacteria" id="CAL34268">
    <property type="protein sequence ID" value="CAL34268"/>
    <property type="gene ID" value="Cj0097"/>
</dbReference>
<dbReference type="GeneID" id="904426"/>
<dbReference type="KEGG" id="cje:Cj0097"/>
<dbReference type="PATRIC" id="fig|192222.6.peg.95"/>
<dbReference type="eggNOG" id="COG0263">
    <property type="taxonomic scope" value="Bacteria"/>
</dbReference>
<dbReference type="HOGENOM" id="CLU_025400_0_0_7"/>
<dbReference type="OrthoDB" id="9804434at2"/>
<dbReference type="UniPathway" id="UPA00098">
    <property type="reaction ID" value="UER00359"/>
</dbReference>
<dbReference type="EvolutionaryTrace" id="Q9PJ29"/>
<dbReference type="Proteomes" id="UP000000799">
    <property type="component" value="Chromosome"/>
</dbReference>
<dbReference type="GO" id="GO:0005829">
    <property type="term" value="C:cytosol"/>
    <property type="evidence" value="ECO:0007669"/>
    <property type="project" value="TreeGrafter"/>
</dbReference>
<dbReference type="GO" id="GO:0005524">
    <property type="term" value="F:ATP binding"/>
    <property type="evidence" value="ECO:0007669"/>
    <property type="project" value="UniProtKB-KW"/>
</dbReference>
<dbReference type="GO" id="GO:0004349">
    <property type="term" value="F:glutamate 5-kinase activity"/>
    <property type="evidence" value="ECO:0007669"/>
    <property type="project" value="UniProtKB-UniRule"/>
</dbReference>
<dbReference type="GO" id="GO:0055129">
    <property type="term" value="P:L-proline biosynthetic process"/>
    <property type="evidence" value="ECO:0007669"/>
    <property type="project" value="UniProtKB-UniRule"/>
</dbReference>
<dbReference type="CDD" id="cd04242">
    <property type="entry name" value="AAK_G5K_ProB"/>
    <property type="match status" value="1"/>
</dbReference>
<dbReference type="FunFam" id="3.40.1160.10:FF:000006">
    <property type="entry name" value="Glutamate 5-kinase"/>
    <property type="match status" value="1"/>
</dbReference>
<dbReference type="Gene3D" id="3.40.1160.10">
    <property type="entry name" value="Acetylglutamate kinase-like"/>
    <property type="match status" value="1"/>
</dbReference>
<dbReference type="HAMAP" id="MF_00456">
    <property type="entry name" value="ProB"/>
    <property type="match status" value="1"/>
</dbReference>
<dbReference type="InterPro" id="IPR036393">
    <property type="entry name" value="AceGlu_kinase-like_sf"/>
</dbReference>
<dbReference type="InterPro" id="IPR001048">
    <property type="entry name" value="Asp/Glu/Uridylate_kinase"/>
</dbReference>
<dbReference type="InterPro" id="IPR041739">
    <property type="entry name" value="G5K_ProB"/>
</dbReference>
<dbReference type="InterPro" id="IPR001057">
    <property type="entry name" value="Glu/AcGlu_kinase"/>
</dbReference>
<dbReference type="InterPro" id="IPR011529">
    <property type="entry name" value="Glu_5kinase"/>
</dbReference>
<dbReference type="InterPro" id="IPR005715">
    <property type="entry name" value="Glu_5kinase/COase_Synthase"/>
</dbReference>
<dbReference type="InterPro" id="IPR019797">
    <property type="entry name" value="Glutamate_5-kinase_CS"/>
</dbReference>
<dbReference type="NCBIfam" id="TIGR01027">
    <property type="entry name" value="proB"/>
    <property type="match status" value="1"/>
</dbReference>
<dbReference type="PANTHER" id="PTHR43654">
    <property type="entry name" value="GLUTAMATE 5-KINASE"/>
    <property type="match status" value="1"/>
</dbReference>
<dbReference type="PANTHER" id="PTHR43654:SF3">
    <property type="entry name" value="GLUTAMATE 5-KINASE"/>
    <property type="match status" value="1"/>
</dbReference>
<dbReference type="Pfam" id="PF00696">
    <property type="entry name" value="AA_kinase"/>
    <property type="match status" value="1"/>
</dbReference>
<dbReference type="PIRSF" id="PIRSF000729">
    <property type="entry name" value="GK"/>
    <property type="match status" value="1"/>
</dbReference>
<dbReference type="PRINTS" id="PR00474">
    <property type="entry name" value="GLU5KINASE"/>
</dbReference>
<dbReference type="SUPFAM" id="SSF53633">
    <property type="entry name" value="Carbamate kinase-like"/>
    <property type="match status" value="1"/>
</dbReference>
<dbReference type="PROSITE" id="PS00902">
    <property type="entry name" value="GLUTAMATE_5_KINASE"/>
    <property type="match status" value="1"/>
</dbReference>